<name>GCSPA_STAES</name>
<accession>Q8CMM0</accession>
<keyword id="KW-0560">Oxidoreductase</keyword>
<dbReference type="EC" id="1.4.4.2" evidence="1"/>
<dbReference type="EMBL" id="AE015929">
    <property type="protein sequence ID" value="AAO04820.1"/>
    <property type="molecule type" value="Genomic_DNA"/>
</dbReference>
<dbReference type="RefSeq" id="NP_764776.1">
    <property type="nucleotide sequence ID" value="NC_004461.1"/>
</dbReference>
<dbReference type="RefSeq" id="WP_002456181.1">
    <property type="nucleotide sequence ID" value="NZ_WBME01000008.1"/>
</dbReference>
<dbReference type="SMR" id="Q8CMM0"/>
<dbReference type="GeneID" id="50018661"/>
<dbReference type="KEGG" id="sep:SE_1221"/>
<dbReference type="PATRIC" id="fig|176280.10.peg.1191"/>
<dbReference type="eggNOG" id="COG0403">
    <property type="taxonomic scope" value="Bacteria"/>
</dbReference>
<dbReference type="HOGENOM" id="CLU_004620_0_2_9"/>
<dbReference type="OrthoDB" id="9771867at2"/>
<dbReference type="Proteomes" id="UP000001411">
    <property type="component" value="Chromosome"/>
</dbReference>
<dbReference type="GO" id="GO:0004375">
    <property type="term" value="F:glycine dehydrogenase (decarboxylating) activity"/>
    <property type="evidence" value="ECO:0007669"/>
    <property type="project" value="UniProtKB-EC"/>
</dbReference>
<dbReference type="GO" id="GO:0019464">
    <property type="term" value="P:glycine decarboxylation via glycine cleavage system"/>
    <property type="evidence" value="ECO:0007669"/>
    <property type="project" value="UniProtKB-UniRule"/>
</dbReference>
<dbReference type="GO" id="GO:0009116">
    <property type="term" value="P:nucleoside metabolic process"/>
    <property type="evidence" value="ECO:0007669"/>
    <property type="project" value="InterPro"/>
</dbReference>
<dbReference type="CDD" id="cd00613">
    <property type="entry name" value="GDC-P"/>
    <property type="match status" value="1"/>
</dbReference>
<dbReference type="Gene3D" id="3.90.1150.10">
    <property type="entry name" value="Aspartate Aminotransferase, domain 1"/>
    <property type="match status" value="1"/>
</dbReference>
<dbReference type="Gene3D" id="3.40.640.10">
    <property type="entry name" value="Type I PLP-dependent aspartate aminotransferase-like (Major domain)"/>
    <property type="match status" value="1"/>
</dbReference>
<dbReference type="HAMAP" id="MF_00712">
    <property type="entry name" value="GcvPA"/>
    <property type="match status" value="1"/>
</dbReference>
<dbReference type="InterPro" id="IPR023010">
    <property type="entry name" value="GcvPA"/>
</dbReference>
<dbReference type="InterPro" id="IPR049315">
    <property type="entry name" value="GDC-P_N"/>
</dbReference>
<dbReference type="InterPro" id="IPR020581">
    <property type="entry name" value="GDC_P"/>
</dbReference>
<dbReference type="InterPro" id="IPR015424">
    <property type="entry name" value="PyrdxlP-dep_Trfase"/>
</dbReference>
<dbReference type="InterPro" id="IPR015421">
    <property type="entry name" value="PyrdxlP-dep_Trfase_major"/>
</dbReference>
<dbReference type="InterPro" id="IPR015422">
    <property type="entry name" value="PyrdxlP-dep_Trfase_small"/>
</dbReference>
<dbReference type="NCBIfam" id="NF001696">
    <property type="entry name" value="PRK00451.1"/>
    <property type="match status" value="1"/>
</dbReference>
<dbReference type="PANTHER" id="PTHR42806">
    <property type="entry name" value="GLYCINE CLEAVAGE SYSTEM P-PROTEIN"/>
    <property type="match status" value="1"/>
</dbReference>
<dbReference type="PANTHER" id="PTHR42806:SF1">
    <property type="entry name" value="GLYCINE DEHYDROGENASE (DECARBOXYLATING)"/>
    <property type="match status" value="1"/>
</dbReference>
<dbReference type="Pfam" id="PF02347">
    <property type="entry name" value="GDC-P"/>
    <property type="match status" value="1"/>
</dbReference>
<dbReference type="PIRSF" id="PIRSF006815">
    <property type="entry name" value="GcvPA"/>
    <property type="match status" value="1"/>
</dbReference>
<dbReference type="SUPFAM" id="SSF53383">
    <property type="entry name" value="PLP-dependent transferases"/>
    <property type="match status" value="1"/>
</dbReference>
<evidence type="ECO:0000255" key="1">
    <source>
        <dbReference type="HAMAP-Rule" id="MF_00712"/>
    </source>
</evidence>
<reference key="1">
    <citation type="journal article" date="2003" name="Mol. Microbiol.">
        <title>Genome-based analysis of virulence genes in a non-biofilm-forming Staphylococcus epidermidis strain (ATCC 12228).</title>
        <authorList>
            <person name="Zhang Y.-Q."/>
            <person name="Ren S.-X."/>
            <person name="Li H.-L."/>
            <person name="Wang Y.-X."/>
            <person name="Fu G."/>
            <person name="Yang J."/>
            <person name="Qin Z.-Q."/>
            <person name="Miao Y.-G."/>
            <person name="Wang W.-Y."/>
            <person name="Chen R.-S."/>
            <person name="Shen Y."/>
            <person name="Chen Z."/>
            <person name="Yuan Z.-H."/>
            <person name="Zhao G.-P."/>
            <person name="Qu D."/>
            <person name="Danchin A."/>
            <person name="Wen Y.-M."/>
        </authorList>
    </citation>
    <scope>NUCLEOTIDE SEQUENCE [LARGE SCALE GENOMIC DNA]</scope>
    <source>
        <strain>ATCC 12228 / FDA PCI 1200</strain>
    </source>
</reference>
<protein>
    <recommendedName>
        <fullName evidence="1">Probable glycine dehydrogenase (decarboxylating) subunit 1</fullName>
        <ecNumber evidence="1">1.4.4.2</ecNumber>
    </recommendedName>
    <alternativeName>
        <fullName evidence="1">Glycine cleavage system P-protein subunit 1</fullName>
    </alternativeName>
    <alternativeName>
        <fullName evidence="1">Glycine decarboxylase subunit 1</fullName>
    </alternativeName>
    <alternativeName>
        <fullName evidence="1">Glycine dehydrogenase (aminomethyl-transferring) subunit 1</fullName>
    </alternativeName>
</protein>
<comment type="function">
    <text evidence="1">The glycine cleavage system catalyzes the degradation of glycine. The P protein binds the alpha-amino group of glycine through its pyridoxal phosphate cofactor; CO(2) is released and the remaining methylamine moiety is then transferred to the lipoamide cofactor of the H protein.</text>
</comment>
<comment type="catalytic activity">
    <reaction evidence="1">
        <text>N(6)-[(R)-lipoyl]-L-lysyl-[glycine-cleavage complex H protein] + glycine + H(+) = N(6)-[(R)-S(8)-aminomethyldihydrolipoyl]-L-lysyl-[glycine-cleavage complex H protein] + CO2</text>
        <dbReference type="Rhea" id="RHEA:24304"/>
        <dbReference type="Rhea" id="RHEA-COMP:10494"/>
        <dbReference type="Rhea" id="RHEA-COMP:10495"/>
        <dbReference type="ChEBI" id="CHEBI:15378"/>
        <dbReference type="ChEBI" id="CHEBI:16526"/>
        <dbReference type="ChEBI" id="CHEBI:57305"/>
        <dbReference type="ChEBI" id="CHEBI:83099"/>
        <dbReference type="ChEBI" id="CHEBI:83143"/>
        <dbReference type="EC" id="1.4.4.2"/>
    </reaction>
</comment>
<comment type="subunit">
    <text evidence="1">The glycine cleavage system is composed of four proteins: P, T, L and H. In this organism, the P 'protein' is a heterodimer of two subunits.</text>
</comment>
<comment type="similarity">
    <text evidence="1">Belongs to the GcvP family. N-terminal subunit subfamily.</text>
</comment>
<sequence length="448" mass="49962">MSHRYIPLTEQDKNEMLNSIGAKSISELFDDIPTDILLKRNLNIAESEAETILLRRLNRLAAKNTTKETHATFLGAGVYDHYTPAVVDAMISRSEFYTAYTPYQPEISQGELQAIFEFQTLICELTDMDVANSSMYDGMTSFAEACILALSHTKKNKIVVSSGLHYQALQILHTYAKTRDEFEIIEVDLKGTITDLEKLEQLIDDNTAAVAVQYPNFYGSIEDLEQINNYIKDKKALFIVYANPLSLGLLTPPGTFGADIVVGDTQPFGIPTQFGGPHCGYFATTKKLMRKVPGRLVGQTQDDEGNRGFVLTLQAREQHIRRDKATSNICSNQALNALASSIAMSALGKQGIYEIAVQNLKNANYAKNKFEEHGFEVLKAQSFNEFVVKFNQPIKNINLKLAEYGYIGGFDLGEVSDDFKNHMLVAVTELRSKDEIDDFVTKAGELND</sequence>
<organism>
    <name type="scientific">Staphylococcus epidermidis (strain ATCC 12228 / FDA PCI 1200)</name>
    <dbReference type="NCBI Taxonomy" id="176280"/>
    <lineage>
        <taxon>Bacteria</taxon>
        <taxon>Bacillati</taxon>
        <taxon>Bacillota</taxon>
        <taxon>Bacilli</taxon>
        <taxon>Bacillales</taxon>
        <taxon>Staphylococcaceae</taxon>
        <taxon>Staphylococcus</taxon>
    </lineage>
</organism>
<proteinExistence type="inferred from homology"/>
<gene>
    <name evidence="1" type="primary">gcvPA</name>
    <name type="ordered locus">SE_1221</name>
</gene>
<feature type="chain" id="PRO_0000166976" description="Probable glycine dehydrogenase (decarboxylating) subunit 1">
    <location>
        <begin position="1"/>
        <end position="448"/>
    </location>
</feature>